<dbReference type="EMBL" id="AK030282">
    <property type="protein sequence ID" value="BAC26878.1"/>
    <property type="molecule type" value="mRNA"/>
</dbReference>
<dbReference type="EMBL" id="AK162506">
    <property type="protein sequence ID" value="BAE36951.1"/>
    <property type="molecule type" value="mRNA"/>
</dbReference>
<dbReference type="EMBL" id="AC154473">
    <property type="status" value="NOT_ANNOTATED_CDS"/>
    <property type="molecule type" value="Genomic_DNA"/>
</dbReference>
<dbReference type="EMBL" id="AC154854">
    <property type="status" value="NOT_ANNOTATED_CDS"/>
    <property type="molecule type" value="Genomic_DNA"/>
</dbReference>
<dbReference type="EMBL" id="BC043118">
    <property type="protein sequence ID" value="AAH43118.1"/>
    <property type="molecule type" value="mRNA"/>
</dbReference>
<dbReference type="RefSeq" id="NP_777273.2">
    <property type="nucleotide sequence ID" value="NM_174848.3"/>
</dbReference>
<dbReference type="PDB" id="4FD9">
    <property type="method" value="X-ray"/>
    <property type="resolution" value="1.86 A"/>
    <property type="chains" value="A/B=510-601"/>
</dbReference>
<dbReference type="PDBsum" id="4FD9"/>
<dbReference type="SMR" id="Q80W49"/>
<dbReference type="BioGRID" id="230261">
    <property type="interactions" value="2"/>
</dbReference>
<dbReference type="STRING" id="10090.ENSMUSP00000156047"/>
<dbReference type="CAZy" id="CBM13">
    <property type="family name" value="Carbohydrate-Binding Module Family 13"/>
</dbReference>
<dbReference type="GlyGen" id="Q80W49">
    <property type="glycosylation" value="1 site, 1 O-linked glycan (1 site)"/>
</dbReference>
<dbReference type="iPTMnet" id="Q80W49"/>
<dbReference type="PhosphoSitePlus" id="Q80W49"/>
<dbReference type="PaxDb" id="10090-ENSMUSP00000037682"/>
<dbReference type="PeptideAtlas" id="Q80W49"/>
<dbReference type="ProteomicsDB" id="285302">
    <molecule id="Q80W49-1"/>
</dbReference>
<dbReference type="ProteomicsDB" id="285303">
    <molecule id="Q80W49-2"/>
</dbReference>
<dbReference type="ProteomicsDB" id="285304">
    <molecule id="Q80W49-3"/>
</dbReference>
<dbReference type="GeneID" id="224273"/>
<dbReference type="KEGG" id="mmu:224273"/>
<dbReference type="UCSC" id="uc007zpj.2">
    <molecule id="Q80W49-3"/>
    <property type="organism name" value="mouse"/>
</dbReference>
<dbReference type="UCSC" id="uc007zpk.2">
    <molecule id="Q80W49-2"/>
    <property type="organism name" value="mouse"/>
</dbReference>
<dbReference type="AGR" id="MGI:2676311"/>
<dbReference type="CTD" id="131544"/>
<dbReference type="MGI" id="MGI:2676311">
    <property type="gene designation" value="Crybg3"/>
</dbReference>
<dbReference type="eggNOG" id="ENOG502QTHR">
    <property type="taxonomic scope" value="Eukaryota"/>
</dbReference>
<dbReference type="HOGENOM" id="CLU_002147_1_0_1"/>
<dbReference type="InParanoid" id="Q80W49"/>
<dbReference type="BioGRID-ORCS" id="224273">
    <property type="hits" value="0 hits in 54 CRISPR screens"/>
</dbReference>
<dbReference type="ChiTaRS" id="Crybg3">
    <property type="organism name" value="mouse"/>
</dbReference>
<dbReference type="EvolutionaryTrace" id="Q80W49"/>
<dbReference type="PRO" id="PR:Q80W49"/>
<dbReference type="Proteomes" id="UP000000589">
    <property type="component" value="Unplaced"/>
</dbReference>
<dbReference type="RNAct" id="Q80W49">
    <property type="molecule type" value="protein"/>
</dbReference>
<dbReference type="GO" id="GO:0030246">
    <property type="term" value="F:carbohydrate binding"/>
    <property type="evidence" value="ECO:0007669"/>
    <property type="project" value="UniProtKB-KW"/>
</dbReference>
<dbReference type="GO" id="GO:0001654">
    <property type="term" value="P:eye development"/>
    <property type="evidence" value="ECO:0007669"/>
    <property type="project" value="UniProtKB-ARBA"/>
</dbReference>
<dbReference type="CDD" id="cd23463">
    <property type="entry name" value="beta-trefoil_Ricin_vlAKAP"/>
    <property type="match status" value="1"/>
</dbReference>
<dbReference type="FunFam" id="2.60.20.10:FF:000013">
    <property type="entry name" value="Crystallin beta-gamma domain containing 3"/>
    <property type="match status" value="1"/>
</dbReference>
<dbReference type="FunFam" id="2.60.20.10:FF:000006">
    <property type="entry name" value="Very large A-kinase anchor protein"/>
    <property type="match status" value="1"/>
</dbReference>
<dbReference type="FunFam" id="2.60.20.10:FF:000008">
    <property type="entry name" value="very large A-kinase anchor protein"/>
    <property type="match status" value="1"/>
</dbReference>
<dbReference type="FunFam" id="2.60.20.10:FF:000009">
    <property type="entry name" value="very large A-kinase anchor protein"/>
    <property type="match status" value="1"/>
</dbReference>
<dbReference type="FunFam" id="2.60.20.10:FF:000010">
    <property type="entry name" value="very large A-kinase anchor protein"/>
    <property type="match status" value="1"/>
</dbReference>
<dbReference type="FunFam" id="2.60.20.10:FF:000011">
    <property type="entry name" value="very large A-kinase anchor protein"/>
    <property type="match status" value="1"/>
</dbReference>
<dbReference type="FunFam" id="2.80.10.50:FF:000038">
    <property type="entry name" value="very large A-kinase anchor protein isoform X1"/>
    <property type="match status" value="1"/>
</dbReference>
<dbReference type="Gene3D" id="2.80.10.50">
    <property type="match status" value="1"/>
</dbReference>
<dbReference type="Gene3D" id="2.60.20.10">
    <property type="entry name" value="Crystallins"/>
    <property type="match status" value="6"/>
</dbReference>
<dbReference type="InterPro" id="IPR050252">
    <property type="entry name" value="Beta/Gamma-Crystallin"/>
</dbReference>
<dbReference type="InterPro" id="IPR001064">
    <property type="entry name" value="Beta/gamma_crystallin"/>
</dbReference>
<dbReference type="InterPro" id="IPR011024">
    <property type="entry name" value="G_crystallin-like"/>
</dbReference>
<dbReference type="InterPro" id="IPR035992">
    <property type="entry name" value="Ricin_B-like_lectins"/>
</dbReference>
<dbReference type="InterPro" id="IPR000772">
    <property type="entry name" value="Ricin_B_lectin"/>
</dbReference>
<dbReference type="PANTHER" id="PTHR11818">
    <property type="entry name" value="BETA/GAMMA CRYSTALLIN"/>
    <property type="match status" value="1"/>
</dbReference>
<dbReference type="PANTHER" id="PTHR11818:SF38">
    <property type="entry name" value="VERY LARGE A-KINASE ANCHOR PROTEIN"/>
    <property type="match status" value="1"/>
</dbReference>
<dbReference type="Pfam" id="PF00030">
    <property type="entry name" value="Crystall"/>
    <property type="match status" value="5"/>
</dbReference>
<dbReference type="Pfam" id="PF00652">
    <property type="entry name" value="Ricin_B_lectin"/>
    <property type="match status" value="1"/>
</dbReference>
<dbReference type="PRINTS" id="PR01367">
    <property type="entry name" value="BGCRYSTALLIN"/>
</dbReference>
<dbReference type="SMART" id="SM00458">
    <property type="entry name" value="RICIN"/>
    <property type="match status" value="1"/>
</dbReference>
<dbReference type="SMART" id="SM00247">
    <property type="entry name" value="XTALbg"/>
    <property type="match status" value="5"/>
</dbReference>
<dbReference type="SUPFAM" id="SSF49695">
    <property type="entry name" value="gamma-Crystallin-like"/>
    <property type="match status" value="3"/>
</dbReference>
<dbReference type="SUPFAM" id="SSF50370">
    <property type="entry name" value="Ricin B-like lectins"/>
    <property type="match status" value="1"/>
</dbReference>
<dbReference type="PROSITE" id="PS50915">
    <property type="entry name" value="CRYSTALLIN_BETA_GAMMA"/>
    <property type="match status" value="7"/>
</dbReference>
<dbReference type="PROSITE" id="PS50231">
    <property type="entry name" value="RICIN_B_LECTIN"/>
    <property type="match status" value="1"/>
</dbReference>
<sequence>MSVPVVYDKRRNLDCREEKEESNLAFVSQDEQDSSSFTILYEEPLQEEDRYTSAELRGSQSLLFPDTSSMPGLACERSESRTDLVHHFEKEGKLGEAFDGDNSEMFLSVEAKRYKIYPLALSPIYEDDSSQEDVLSSEVSPGHHGSSKSRESANQPSSVLSLLQSVSERLQRNFDGDDRQEAEEEEEEAVASGKDWRTEKREHVTFHLPDPSIPFYPEDNQEHAGIFKSYVEFSEPTTSSLQHGRWSEKELFLQKSDMTSKLHSSLKSAYHQYLQTSRTHSSETGTRFGGTLQEPVSKYFRVQDHAGRLSPYVENVDKQTLKCNPRPGKMIIYDLHGSKYKQEVYCNIPDATTWSFPNGALIKVVRGCWILYEKPHFQGQKCVLEEGERVLDRDWLLQNRKHPERNFVLGSIKRVLKDCSIPVIELCPKTDPGCSPIYIHRSVPNVEELNIPKSTSVTVKSGVWLAYPDIHFKGQATILEEDQGLFEISAAEMKSLHPLQMGGLKVEMPMNLKVILYEKPHFLGHTKEFSEHIDSVPTFLKSDKDFHGIGSIRVIGGVWVAYEKEHFKGQQFLLEEGDFEDSSACGALSGPIMSFRYLQANFIESSITLFESSHLESGKFIDITNQEISDLEEIGFGSETRSIHVKSGVWVAYHQKFFCGDQYILEKGKYKCFFDWGGSSNTILSIRPIQLEPLGINEPTHLLKAFSKAGFQGECIDFVKECADLTSFTPASFKVLRGCWLLLYYQEDGFYHQCVLEEGLYVDLTSCGCPSARIRALQPIDYVFEEPSISLFALEHCEGRELHLEDAVNSVLNKDLHFYTQSVWIKSGLWIAYEGSNFLGRQILLTPKEIPNWTAFSGWKTIGSVRPMKQPAVYIRIRNRAQDEYLTVTGNPADARTMSVCISPYSGKDTQIWHYCRGLFKSKASHTCLDVIGGRDTPGAKVALWTEHGQLRQKWRMSRNGTISSYLSDELVLDVKGGNYYDKTHVIVNQPLEGEETQKWDIEIL</sequence>
<gene>
    <name type="primary">Crybg3</name>
</gene>
<protein>
    <recommendedName>
        <fullName>Beta/gamma crystallin domain-containing protein 3</fullName>
    </recommendedName>
</protein>
<evidence type="ECO:0000255" key="1">
    <source>
        <dbReference type="PROSITE-ProRule" id="PRU00028"/>
    </source>
</evidence>
<evidence type="ECO:0000255" key="2">
    <source>
        <dbReference type="PROSITE-ProRule" id="PRU00174"/>
    </source>
</evidence>
<evidence type="ECO:0000256" key="3">
    <source>
        <dbReference type="SAM" id="MobiDB-lite"/>
    </source>
</evidence>
<evidence type="ECO:0000303" key="4">
    <source>
    </source>
</evidence>
<evidence type="ECO:0000303" key="5">
    <source>
    </source>
</evidence>
<evidence type="ECO:0000305" key="6"/>
<evidence type="ECO:0007744" key="7">
    <source>
    </source>
</evidence>
<evidence type="ECO:0007829" key="8">
    <source>
        <dbReference type="PDB" id="4FD9"/>
    </source>
</evidence>
<reference key="1">
    <citation type="journal article" date="2005" name="Science">
        <title>The transcriptional landscape of the mammalian genome.</title>
        <authorList>
            <person name="Carninci P."/>
            <person name="Kasukawa T."/>
            <person name="Katayama S."/>
            <person name="Gough J."/>
            <person name="Frith M.C."/>
            <person name="Maeda N."/>
            <person name="Oyama R."/>
            <person name="Ravasi T."/>
            <person name="Lenhard B."/>
            <person name="Wells C."/>
            <person name="Kodzius R."/>
            <person name="Shimokawa K."/>
            <person name="Bajic V.B."/>
            <person name="Brenner S.E."/>
            <person name="Batalov S."/>
            <person name="Forrest A.R."/>
            <person name="Zavolan M."/>
            <person name="Davis M.J."/>
            <person name="Wilming L.G."/>
            <person name="Aidinis V."/>
            <person name="Allen J.E."/>
            <person name="Ambesi-Impiombato A."/>
            <person name="Apweiler R."/>
            <person name="Aturaliya R.N."/>
            <person name="Bailey T.L."/>
            <person name="Bansal M."/>
            <person name="Baxter L."/>
            <person name="Beisel K.W."/>
            <person name="Bersano T."/>
            <person name="Bono H."/>
            <person name="Chalk A.M."/>
            <person name="Chiu K.P."/>
            <person name="Choudhary V."/>
            <person name="Christoffels A."/>
            <person name="Clutterbuck D.R."/>
            <person name="Crowe M.L."/>
            <person name="Dalla E."/>
            <person name="Dalrymple B.P."/>
            <person name="de Bono B."/>
            <person name="Della Gatta G."/>
            <person name="di Bernardo D."/>
            <person name="Down T."/>
            <person name="Engstrom P."/>
            <person name="Fagiolini M."/>
            <person name="Faulkner G."/>
            <person name="Fletcher C.F."/>
            <person name="Fukushima T."/>
            <person name="Furuno M."/>
            <person name="Futaki S."/>
            <person name="Gariboldi M."/>
            <person name="Georgii-Hemming P."/>
            <person name="Gingeras T.R."/>
            <person name="Gojobori T."/>
            <person name="Green R.E."/>
            <person name="Gustincich S."/>
            <person name="Harbers M."/>
            <person name="Hayashi Y."/>
            <person name="Hensch T.K."/>
            <person name="Hirokawa N."/>
            <person name="Hill D."/>
            <person name="Huminiecki L."/>
            <person name="Iacono M."/>
            <person name="Ikeo K."/>
            <person name="Iwama A."/>
            <person name="Ishikawa T."/>
            <person name="Jakt M."/>
            <person name="Kanapin A."/>
            <person name="Katoh M."/>
            <person name="Kawasawa Y."/>
            <person name="Kelso J."/>
            <person name="Kitamura H."/>
            <person name="Kitano H."/>
            <person name="Kollias G."/>
            <person name="Krishnan S.P."/>
            <person name="Kruger A."/>
            <person name="Kummerfeld S.K."/>
            <person name="Kurochkin I.V."/>
            <person name="Lareau L.F."/>
            <person name="Lazarevic D."/>
            <person name="Lipovich L."/>
            <person name="Liu J."/>
            <person name="Liuni S."/>
            <person name="McWilliam S."/>
            <person name="Madan Babu M."/>
            <person name="Madera M."/>
            <person name="Marchionni L."/>
            <person name="Matsuda H."/>
            <person name="Matsuzawa S."/>
            <person name="Miki H."/>
            <person name="Mignone F."/>
            <person name="Miyake S."/>
            <person name="Morris K."/>
            <person name="Mottagui-Tabar S."/>
            <person name="Mulder N."/>
            <person name="Nakano N."/>
            <person name="Nakauchi H."/>
            <person name="Ng P."/>
            <person name="Nilsson R."/>
            <person name="Nishiguchi S."/>
            <person name="Nishikawa S."/>
            <person name="Nori F."/>
            <person name="Ohara O."/>
            <person name="Okazaki Y."/>
            <person name="Orlando V."/>
            <person name="Pang K.C."/>
            <person name="Pavan W.J."/>
            <person name="Pavesi G."/>
            <person name="Pesole G."/>
            <person name="Petrovsky N."/>
            <person name="Piazza S."/>
            <person name="Reed J."/>
            <person name="Reid J.F."/>
            <person name="Ring B.Z."/>
            <person name="Ringwald M."/>
            <person name="Rost B."/>
            <person name="Ruan Y."/>
            <person name="Salzberg S.L."/>
            <person name="Sandelin A."/>
            <person name="Schneider C."/>
            <person name="Schoenbach C."/>
            <person name="Sekiguchi K."/>
            <person name="Semple C.A."/>
            <person name="Seno S."/>
            <person name="Sessa L."/>
            <person name="Sheng Y."/>
            <person name="Shibata Y."/>
            <person name="Shimada H."/>
            <person name="Shimada K."/>
            <person name="Silva D."/>
            <person name="Sinclair B."/>
            <person name="Sperling S."/>
            <person name="Stupka E."/>
            <person name="Sugiura K."/>
            <person name="Sultana R."/>
            <person name="Takenaka Y."/>
            <person name="Taki K."/>
            <person name="Tammoja K."/>
            <person name="Tan S.L."/>
            <person name="Tang S."/>
            <person name="Taylor M.S."/>
            <person name="Tegner J."/>
            <person name="Teichmann S.A."/>
            <person name="Ueda H.R."/>
            <person name="van Nimwegen E."/>
            <person name="Verardo R."/>
            <person name="Wei C.L."/>
            <person name="Yagi K."/>
            <person name="Yamanishi H."/>
            <person name="Zabarovsky E."/>
            <person name="Zhu S."/>
            <person name="Zimmer A."/>
            <person name="Hide W."/>
            <person name="Bult C."/>
            <person name="Grimmond S.M."/>
            <person name="Teasdale R.D."/>
            <person name="Liu E.T."/>
            <person name="Brusic V."/>
            <person name="Quackenbush J."/>
            <person name="Wahlestedt C."/>
            <person name="Mattick J.S."/>
            <person name="Hume D.A."/>
            <person name="Kai C."/>
            <person name="Sasaki D."/>
            <person name="Tomaru Y."/>
            <person name="Fukuda S."/>
            <person name="Kanamori-Katayama M."/>
            <person name="Suzuki M."/>
            <person name="Aoki J."/>
            <person name="Arakawa T."/>
            <person name="Iida J."/>
            <person name="Imamura K."/>
            <person name="Itoh M."/>
            <person name="Kato T."/>
            <person name="Kawaji H."/>
            <person name="Kawagashira N."/>
            <person name="Kawashima T."/>
            <person name="Kojima M."/>
            <person name="Kondo S."/>
            <person name="Konno H."/>
            <person name="Nakano K."/>
            <person name="Ninomiya N."/>
            <person name="Nishio T."/>
            <person name="Okada M."/>
            <person name="Plessy C."/>
            <person name="Shibata K."/>
            <person name="Shiraki T."/>
            <person name="Suzuki S."/>
            <person name="Tagami M."/>
            <person name="Waki K."/>
            <person name="Watahiki A."/>
            <person name="Okamura-Oho Y."/>
            <person name="Suzuki H."/>
            <person name="Kawai J."/>
            <person name="Hayashizaki Y."/>
        </authorList>
    </citation>
    <scope>NUCLEOTIDE SEQUENCE [LARGE SCALE MRNA] (ISOFORM 3)</scope>
    <scope>NUCLEOTIDE SEQUENCE [LARGE SCALE MRNA] OF 619-1005 (ISOFORM 1/2/3)</scope>
    <source>
        <strain>C57BL/6J</strain>
        <tissue>Urinary bladder</tissue>
    </source>
</reference>
<reference key="2">
    <citation type="journal article" date="2009" name="PLoS Biol.">
        <title>Lineage-specific biology revealed by a finished genome assembly of the mouse.</title>
        <authorList>
            <person name="Church D.M."/>
            <person name="Goodstadt L."/>
            <person name="Hillier L.W."/>
            <person name="Zody M.C."/>
            <person name="Goldstein S."/>
            <person name="She X."/>
            <person name="Bult C.J."/>
            <person name="Agarwala R."/>
            <person name="Cherry J.L."/>
            <person name="DiCuccio M."/>
            <person name="Hlavina W."/>
            <person name="Kapustin Y."/>
            <person name="Meric P."/>
            <person name="Maglott D."/>
            <person name="Birtle Z."/>
            <person name="Marques A.C."/>
            <person name="Graves T."/>
            <person name="Zhou S."/>
            <person name="Teague B."/>
            <person name="Potamousis K."/>
            <person name="Churas C."/>
            <person name="Place M."/>
            <person name="Herschleb J."/>
            <person name="Runnheim R."/>
            <person name="Forrest D."/>
            <person name="Amos-Landgraf J."/>
            <person name="Schwartz D.C."/>
            <person name="Cheng Z."/>
            <person name="Lindblad-Toh K."/>
            <person name="Eichler E.E."/>
            <person name="Ponting C.P."/>
        </authorList>
    </citation>
    <scope>NUCLEOTIDE SEQUENCE [LARGE SCALE GENOMIC DNA]</scope>
    <source>
        <strain>C57BL/6J</strain>
    </source>
</reference>
<reference key="3">
    <citation type="journal article" date="2004" name="Genome Res.">
        <title>The status, quality, and expansion of the NIH full-length cDNA project: the Mammalian Gene Collection (MGC).</title>
        <authorList>
            <consortium name="The MGC Project Team"/>
        </authorList>
    </citation>
    <scope>NUCLEOTIDE SEQUENCE [LARGE SCALE MRNA] (ISOFORM 2)</scope>
    <source>
        <strain>C57BL/6J</strain>
        <tissue>Brain</tissue>
    </source>
</reference>
<reference key="4">
    <citation type="journal article" date="2010" name="Cell">
        <title>A tissue-specific atlas of mouse protein phosphorylation and expression.</title>
        <authorList>
            <person name="Huttlin E.L."/>
            <person name="Jedrychowski M.P."/>
            <person name="Elias J.E."/>
            <person name="Goswami T."/>
            <person name="Rad R."/>
            <person name="Beausoleil S.A."/>
            <person name="Villen J."/>
            <person name="Haas W."/>
            <person name="Sowa M.E."/>
            <person name="Gygi S.P."/>
        </authorList>
    </citation>
    <scope>PHOSPHORYLATION [LARGE SCALE ANALYSIS] AT SER-122; SER-129; SER-130; SER-136 AND SER-140</scope>
    <scope>IDENTIFICATION BY MASS SPECTROMETRY [LARGE SCALE ANALYSIS]</scope>
    <source>
        <tissue>Heart</tissue>
        <tissue>Kidney</tissue>
        <tissue>Lung</tissue>
        <tissue>Testis</tissue>
    </source>
</reference>
<reference key="5">
    <citation type="journal article" date="2012" name="Biochemistry">
        <title>Aggregation-prone near-native intermediate formation during unfolding of a structurally similar nonlenticular betagamma-crystallin domain.</title>
        <authorList>
            <person name="Rajanikanth V."/>
            <person name="Srivastava S.S."/>
            <person name="Singh A.K."/>
            <person name="Rajyalakshmi M."/>
            <person name="Chandra K."/>
            <person name="Aravind P."/>
            <person name="Sankaranarayanan R."/>
            <person name="Sharma Y."/>
        </authorList>
    </citation>
    <scope>X-RAY CRYSTALLOGRAPHY (1.86 ANGSTROMS) OF 510-601</scope>
</reference>
<accession>Q80W49</accession>
<accession>Q3TRS6</accession>
<accession>Q8BMQ9</accession>
<organism>
    <name type="scientific">Mus musculus</name>
    <name type="common">Mouse</name>
    <dbReference type="NCBI Taxonomy" id="10090"/>
    <lineage>
        <taxon>Eukaryota</taxon>
        <taxon>Metazoa</taxon>
        <taxon>Chordata</taxon>
        <taxon>Craniata</taxon>
        <taxon>Vertebrata</taxon>
        <taxon>Euteleostomi</taxon>
        <taxon>Mammalia</taxon>
        <taxon>Eutheria</taxon>
        <taxon>Euarchontoglires</taxon>
        <taxon>Glires</taxon>
        <taxon>Rodentia</taxon>
        <taxon>Myomorpha</taxon>
        <taxon>Muroidea</taxon>
        <taxon>Muridae</taxon>
        <taxon>Murinae</taxon>
        <taxon>Mus</taxon>
        <taxon>Mus</taxon>
    </lineage>
</organism>
<feature type="chain" id="PRO_0000325759" description="Beta/gamma crystallin domain-containing protein 3">
    <location>
        <begin position="1"/>
        <end position="1005"/>
    </location>
</feature>
<feature type="domain" description="Beta/gamma crystallin 'Greek key' 1" evidence="1">
    <location>
        <begin position="367"/>
        <end position="416"/>
    </location>
</feature>
<feature type="domain" description="Beta/gamma crystallin 'Greek key' 2" evidence="1">
    <location>
        <begin position="462"/>
        <end position="500"/>
    </location>
</feature>
<feature type="domain" description="Beta/gamma crystallin 'Greek key' 3" evidence="1">
    <location>
        <begin position="512"/>
        <end position="556"/>
    </location>
</feature>
<feature type="domain" description="Beta/gamma crystallin 'Greek key' 4" evidence="1">
    <location>
        <begin position="557"/>
        <end position="599"/>
    </location>
</feature>
<feature type="domain" description="Beta/gamma crystallin 'Greek key' 5" evidence="1">
    <location>
        <begin position="605"/>
        <end position="647"/>
    </location>
</feature>
<feature type="domain" description="Beta/gamma crystallin 'Greek key' 6" evidence="1">
    <location>
        <begin position="648"/>
        <end position="690"/>
    </location>
</feature>
<feature type="domain" description="Beta/gamma crystallin 'Greek key' 7" evidence="1">
    <location>
        <begin position="701"/>
        <end position="737"/>
    </location>
</feature>
<feature type="domain" description="Beta/gamma crystallin 'Greek key' 8" evidence="1">
    <location>
        <begin position="738"/>
        <end position="781"/>
    </location>
</feature>
<feature type="domain" description="Beta/gamma crystallin 'Greek key' 9" evidence="1">
    <location>
        <begin position="828"/>
        <end position="869"/>
    </location>
</feature>
<feature type="domain" description="Ricin B-type lectin" evidence="2">
    <location>
        <begin position="871"/>
        <end position="1003"/>
    </location>
</feature>
<feature type="region of interest" description="Disordered" evidence="3">
    <location>
        <begin position="132"/>
        <end position="159"/>
    </location>
</feature>
<feature type="region of interest" description="Disordered" evidence="3">
    <location>
        <begin position="173"/>
        <end position="198"/>
    </location>
</feature>
<feature type="compositionally biased region" description="Acidic residues" evidence="3">
    <location>
        <begin position="180"/>
        <end position="189"/>
    </location>
</feature>
<feature type="modified residue" description="Phosphoserine" evidence="7">
    <location>
        <position position="122"/>
    </location>
</feature>
<feature type="modified residue" description="Phosphoserine" evidence="7">
    <location>
        <position position="129"/>
    </location>
</feature>
<feature type="modified residue" description="Phosphoserine" evidence="7">
    <location>
        <position position="130"/>
    </location>
</feature>
<feature type="modified residue" description="Phosphoserine" evidence="7">
    <location>
        <position position="136"/>
    </location>
</feature>
<feature type="modified residue" description="Phosphoserine" evidence="7">
    <location>
        <position position="140"/>
    </location>
</feature>
<feature type="splice variant" id="VSP_032387" description="In isoform 3." evidence="5">
    <location>
        <begin position="1"/>
        <end position="698"/>
    </location>
</feature>
<feature type="splice variant" id="VSP_032388" description="In isoform 2." evidence="4">
    <original>M</original>
    <variation>MEVAMERTNGTTPGVTIMQTDALGPAFENTKDPREYMEKSIGEIEEPPGEVKKGLILHDDRLASHFRGYESPTLSKDYEGYPASAIPDVQEEDTVVRLKKIM</variation>
    <location>
        <position position="1"/>
    </location>
</feature>
<feature type="splice variant" id="VSP_032389" description="In isoform 3." evidence="5">
    <original>PTHL</original>
    <variation>MFSQ</variation>
    <location>
        <begin position="699"/>
        <end position="702"/>
    </location>
</feature>
<feature type="strand" evidence="8">
    <location>
        <begin position="513"/>
        <end position="519"/>
    </location>
</feature>
<feature type="helix" evidence="8">
    <location>
        <begin position="520"/>
        <end position="522"/>
    </location>
</feature>
<feature type="strand" evidence="8">
    <location>
        <begin position="523"/>
        <end position="531"/>
    </location>
</feature>
<feature type="helix" evidence="8">
    <location>
        <begin position="536"/>
        <end position="539"/>
    </location>
</feature>
<feature type="strand" evidence="8">
    <location>
        <begin position="551"/>
        <end position="557"/>
    </location>
</feature>
<feature type="strand" evidence="8">
    <location>
        <begin position="559"/>
        <end position="564"/>
    </location>
</feature>
<feature type="turn" evidence="8">
    <location>
        <begin position="565"/>
        <end position="567"/>
    </location>
</feature>
<feature type="strand" evidence="8">
    <location>
        <begin position="568"/>
        <end position="574"/>
    </location>
</feature>
<feature type="strand" evidence="8">
    <location>
        <begin position="576"/>
        <end position="579"/>
    </location>
</feature>
<feature type="turn" evidence="8">
    <location>
        <begin position="582"/>
        <end position="584"/>
    </location>
</feature>
<feature type="helix" evidence="8">
    <location>
        <begin position="586"/>
        <end position="589"/>
    </location>
</feature>
<feature type="strand" evidence="8">
    <location>
        <begin position="594"/>
        <end position="597"/>
    </location>
</feature>
<keyword id="KW-0002">3D-structure</keyword>
<keyword id="KW-0025">Alternative splicing</keyword>
<keyword id="KW-0430">Lectin</keyword>
<keyword id="KW-0597">Phosphoprotein</keyword>
<keyword id="KW-1185">Reference proteome</keyword>
<keyword id="KW-0677">Repeat</keyword>
<comment type="alternative products">
    <event type="alternative splicing"/>
    <isoform>
        <id>Q80W49-1</id>
        <name>1</name>
        <sequence type="displayed"/>
    </isoform>
    <isoform>
        <id>Q80W49-2</id>
        <name>2</name>
        <sequence type="described" ref="VSP_032388"/>
    </isoform>
    <isoform>
        <id>Q80W49-3</id>
        <name>3</name>
        <sequence type="described" ref="VSP_032387 VSP_032389"/>
    </isoform>
</comment>
<comment type="similarity">
    <text evidence="6">Belongs to the beta/gamma-crystallin family.</text>
</comment>
<proteinExistence type="evidence at protein level"/>
<name>CRBG3_MOUSE</name>